<dbReference type="EC" id="2.3.1.-" evidence="9"/>
<dbReference type="EMBL" id="AL163832">
    <property type="protein sequence ID" value="CAB87853.1"/>
    <property type="molecule type" value="Genomic_DNA"/>
</dbReference>
<dbReference type="EMBL" id="CP002686">
    <property type="protein sequence ID" value="AEE79464.1"/>
    <property type="molecule type" value="Genomic_DNA"/>
</dbReference>
<dbReference type="EMBL" id="AK118662">
    <property type="protein sequence ID" value="BAC43257.1"/>
    <property type="molecule type" value="mRNA"/>
</dbReference>
<dbReference type="PIR" id="T49211">
    <property type="entry name" value="T49211"/>
</dbReference>
<dbReference type="RefSeq" id="NP_191158.1">
    <property type="nucleotide sequence ID" value="NM_115457.3"/>
</dbReference>
<dbReference type="PDB" id="6CCI">
    <property type="method" value="X-ray"/>
    <property type="resolution" value="1.85 A"/>
    <property type="chains" value="A=1-487"/>
</dbReference>
<dbReference type="PDBsum" id="6CCI"/>
<dbReference type="SMR" id="Q9LY46"/>
<dbReference type="BioGRID" id="10081">
    <property type="interactions" value="4"/>
</dbReference>
<dbReference type="FunCoup" id="Q9LY46">
    <property type="interactions" value="58"/>
</dbReference>
<dbReference type="IntAct" id="Q9LY46">
    <property type="interactions" value="4"/>
</dbReference>
<dbReference type="STRING" id="3702.Q9LY46"/>
<dbReference type="GlyCosmos" id="Q9LY46">
    <property type="glycosylation" value="6 sites, No reported glycans"/>
</dbReference>
<dbReference type="GlyGen" id="Q9LY46">
    <property type="glycosylation" value="6 sites"/>
</dbReference>
<dbReference type="iPTMnet" id="Q9LY46"/>
<dbReference type="PaxDb" id="3702-AT3G55990.1"/>
<dbReference type="ProteomicsDB" id="234143"/>
<dbReference type="EnsemblPlants" id="AT3G55990.1">
    <property type="protein sequence ID" value="AT3G55990.1"/>
    <property type="gene ID" value="AT3G55990"/>
</dbReference>
<dbReference type="GeneID" id="824765"/>
<dbReference type="Gramene" id="AT3G55990.1">
    <property type="protein sequence ID" value="AT3G55990.1"/>
    <property type="gene ID" value="AT3G55990"/>
</dbReference>
<dbReference type="KEGG" id="ath:AT3G55990"/>
<dbReference type="Araport" id="AT3G55990"/>
<dbReference type="TAIR" id="AT3G55990">
    <property type="gene designation" value="ESK1"/>
</dbReference>
<dbReference type="eggNOG" id="ENOG502QUBK">
    <property type="taxonomic scope" value="Eukaryota"/>
</dbReference>
<dbReference type="HOGENOM" id="CLU_020953_3_2_1"/>
<dbReference type="InParanoid" id="Q9LY46"/>
<dbReference type="OMA" id="FTIEDYN"/>
<dbReference type="OrthoDB" id="1932925at2759"/>
<dbReference type="PhylomeDB" id="Q9LY46"/>
<dbReference type="PRO" id="PR:Q9LY46"/>
<dbReference type="Proteomes" id="UP000006548">
    <property type="component" value="Chromosome 3"/>
</dbReference>
<dbReference type="ExpressionAtlas" id="Q9LY46">
    <property type="expression patterns" value="baseline and differential"/>
</dbReference>
<dbReference type="GO" id="GO:0005794">
    <property type="term" value="C:Golgi apparatus"/>
    <property type="evidence" value="ECO:0000314"/>
    <property type="project" value="TAIR"/>
</dbReference>
<dbReference type="GO" id="GO:0000139">
    <property type="term" value="C:Golgi membrane"/>
    <property type="evidence" value="ECO:0007669"/>
    <property type="project" value="UniProtKB-SubCell"/>
</dbReference>
<dbReference type="GO" id="GO:0016413">
    <property type="term" value="F:O-acetyltransferase activity"/>
    <property type="evidence" value="ECO:0000314"/>
    <property type="project" value="TAIR"/>
</dbReference>
<dbReference type="GO" id="GO:1990538">
    <property type="term" value="F:xylan O-acetyltransferase activity"/>
    <property type="evidence" value="ECO:0000314"/>
    <property type="project" value="TAIR"/>
</dbReference>
<dbReference type="GO" id="GO:0045893">
    <property type="term" value="P:positive regulation of DNA-templated transcription"/>
    <property type="evidence" value="ECO:0000270"/>
    <property type="project" value="TAIR"/>
</dbReference>
<dbReference type="GO" id="GO:0009409">
    <property type="term" value="P:response to cold"/>
    <property type="evidence" value="ECO:0000315"/>
    <property type="project" value="TAIR"/>
</dbReference>
<dbReference type="GO" id="GO:0050826">
    <property type="term" value="P:response to freezing"/>
    <property type="evidence" value="ECO:0000315"/>
    <property type="project" value="TAIR"/>
</dbReference>
<dbReference type="GO" id="GO:0045492">
    <property type="term" value="P:xylan biosynthetic process"/>
    <property type="evidence" value="ECO:0000314"/>
    <property type="project" value="TAIR"/>
</dbReference>
<dbReference type="InterPro" id="IPR029962">
    <property type="entry name" value="TBL"/>
</dbReference>
<dbReference type="InterPro" id="IPR026057">
    <property type="entry name" value="TBL_C"/>
</dbReference>
<dbReference type="InterPro" id="IPR025846">
    <property type="entry name" value="TBL_N"/>
</dbReference>
<dbReference type="PANTHER" id="PTHR32285">
    <property type="entry name" value="PROTEIN TRICHOME BIREFRINGENCE-LIKE 9-RELATED"/>
    <property type="match status" value="1"/>
</dbReference>
<dbReference type="PANTHER" id="PTHR32285:SF10">
    <property type="entry name" value="XYLAN O-ACETYLTRANSFERASE 1"/>
    <property type="match status" value="1"/>
</dbReference>
<dbReference type="Pfam" id="PF13839">
    <property type="entry name" value="PC-Esterase"/>
    <property type="match status" value="1"/>
</dbReference>
<dbReference type="Pfam" id="PF14416">
    <property type="entry name" value="PMR5N"/>
    <property type="match status" value="1"/>
</dbReference>
<sequence length="487" mass="56695">MQPWRRKFPLFETGVTMKQRKNSNLSIFVVVFSVFLFGIFMYNEDVKSIAEFPFSTSKPHDVHDEATPITEITTLPVQESIKNSDPIQESIKNADSVQDSVKDVAEPVQEEVSKTEEVKKIELFAATEDEEDVELPPEECDLFTGEWVFDNETHPLYKEDQCEFLTAQVTCMRNGRRDSLYQNWRWQPRDCSLPKFKAKLLLEKLRNKRMMFVGDSLNRNQWESMVCLVQSVVPPGRKSLNKTGSLSVFRVEDYNATVEFYWAPFLVESNSDDPNMHSILNRIIMPESIEKHGVNWKGVDFLVFNTYIWWMNTFAMKVLRGSFDKGDTEYEEIERPVAYRRVMRTWGDWVERNIDPLRTTVFFASMSPLHIKSLDWENPDGIKCALETTPILNMSMPFSVGTDYRLFSVAENVTHSLNVPVYFLNITKLSEYRKDAHTSVHTIRQGKMLTPEQQADPNTYADCIHWCLPGLPDTWNEFLYTRIISRS</sequence>
<reference key="1">
    <citation type="journal article" date="2000" name="Nature">
        <title>Sequence and analysis of chromosome 3 of the plant Arabidopsis thaliana.</title>
        <authorList>
            <person name="Salanoubat M."/>
            <person name="Lemcke K."/>
            <person name="Rieger M."/>
            <person name="Ansorge W."/>
            <person name="Unseld M."/>
            <person name="Fartmann B."/>
            <person name="Valle G."/>
            <person name="Bloecker H."/>
            <person name="Perez-Alonso M."/>
            <person name="Obermaier B."/>
            <person name="Delseny M."/>
            <person name="Boutry M."/>
            <person name="Grivell L.A."/>
            <person name="Mache R."/>
            <person name="Puigdomenech P."/>
            <person name="De Simone V."/>
            <person name="Choisne N."/>
            <person name="Artiguenave F."/>
            <person name="Robert C."/>
            <person name="Brottier P."/>
            <person name="Wincker P."/>
            <person name="Cattolico L."/>
            <person name="Weissenbach J."/>
            <person name="Saurin W."/>
            <person name="Quetier F."/>
            <person name="Schaefer M."/>
            <person name="Mueller-Auer S."/>
            <person name="Gabel C."/>
            <person name="Fuchs M."/>
            <person name="Benes V."/>
            <person name="Wurmbach E."/>
            <person name="Drzonek H."/>
            <person name="Erfle H."/>
            <person name="Jordan N."/>
            <person name="Bangert S."/>
            <person name="Wiedelmann R."/>
            <person name="Kranz H."/>
            <person name="Voss H."/>
            <person name="Holland R."/>
            <person name="Brandt P."/>
            <person name="Nyakatura G."/>
            <person name="Vezzi A."/>
            <person name="D'Angelo M."/>
            <person name="Pallavicini A."/>
            <person name="Toppo S."/>
            <person name="Simionati B."/>
            <person name="Conrad A."/>
            <person name="Hornischer K."/>
            <person name="Kauer G."/>
            <person name="Loehnert T.-H."/>
            <person name="Nordsiek G."/>
            <person name="Reichelt J."/>
            <person name="Scharfe M."/>
            <person name="Schoen O."/>
            <person name="Bargues M."/>
            <person name="Terol J."/>
            <person name="Climent J."/>
            <person name="Navarro P."/>
            <person name="Collado C."/>
            <person name="Perez-Perez A."/>
            <person name="Ottenwaelder B."/>
            <person name="Duchemin D."/>
            <person name="Cooke R."/>
            <person name="Laudie M."/>
            <person name="Berger-Llauro C."/>
            <person name="Purnelle B."/>
            <person name="Masuy D."/>
            <person name="de Haan M."/>
            <person name="Maarse A.C."/>
            <person name="Alcaraz J.-P."/>
            <person name="Cottet A."/>
            <person name="Casacuberta E."/>
            <person name="Monfort A."/>
            <person name="Argiriou A."/>
            <person name="Flores M."/>
            <person name="Liguori R."/>
            <person name="Vitale D."/>
            <person name="Mannhaupt G."/>
            <person name="Haase D."/>
            <person name="Schoof H."/>
            <person name="Rudd S."/>
            <person name="Zaccaria P."/>
            <person name="Mewes H.-W."/>
            <person name="Mayer K.F.X."/>
            <person name="Kaul S."/>
            <person name="Town C.D."/>
            <person name="Koo H.L."/>
            <person name="Tallon L.J."/>
            <person name="Jenkins J."/>
            <person name="Rooney T."/>
            <person name="Rizzo M."/>
            <person name="Walts A."/>
            <person name="Utterback T."/>
            <person name="Fujii C.Y."/>
            <person name="Shea T.P."/>
            <person name="Creasy T.H."/>
            <person name="Haas B."/>
            <person name="Maiti R."/>
            <person name="Wu D."/>
            <person name="Peterson J."/>
            <person name="Van Aken S."/>
            <person name="Pai G."/>
            <person name="Militscher J."/>
            <person name="Sellers P."/>
            <person name="Gill J.E."/>
            <person name="Feldblyum T.V."/>
            <person name="Preuss D."/>
            <person name="Lin X."/>
            <person name="Nierman W.C."/>
            <person name="Salzberg S.L."/>
            <person name="White O."/>
            <person name="Venter J.C."/>
            <person name="Fraser C.M."/>
            <person name="Kaneko T."/>
            <person name="Nakamura Y."/>
            <person name="Sato S."/>
            <person name="Kato T."/>
            <person name="Asamizu E."/>
            <person name="Sasamoto S."/>
            <person name="Kimura T."/>
            <person name="Idesawa K."/>
            <person name="Kawashima K."/>
            <person name="Kishida Y."/>
            <person name="Kiyokawa C."/>
            <person name="Kohara M."/>
            <person name="Matsumoto M."/>
            <person name="Matsuno A."/>
            <person name="Muraki A."/>
            <person name="Nakayama S."/>
            <person name="Nakazaki N."/>
            <person name="Shinpo S."/>
            <person name="Takeuchi C."/>
            <person name="Wada T."/>
            <person name="Watanabe A."/>
            <person name="Yamada M."/>
            <person name="Yasuda M."/>
            <person name="Tabata S."/>
        </authorList>
    </citation>
    <scope>NUCLEOTIDE SEQUENCE [LARGE SCALE GENOMIC DNA]</scope>
    <source>
        <strain>cv. Columbia</strain>
    </source>
</reference>
<reference key="2">
    <citation type="journal article" date="2017" name="Plant J.">
        <title>Araport11: a complete reannotation of the Arabidopsis thaliana reference genome.</title>
        <authorList>
            <person name="Cheng C.Y."/>
            <person name="Krishnakumar V."/>
            <person name="Chan A.P."/>
            <person name="Thibaud-Nissen F."/>
            <person name="Schobel S."/>
            <person name="Town C.D."/>
        </authorList>
    </citation>
    <scope>GENOME REANNOTATION</scope>
    <source>
        <strain>cv. Columbia</strain>
    </source>
</reference>
<reference key="3">
    <citation type="journal article" date="2002" name="Science">
        <title>Functional annotation of a full-length Arabidopsis cDNA collection.</title>
        <authorList>
            <person name="Seki M."/>
            <person name="Narusaka M."/>
            <person name="Kamiya A."/>
            <person name="Ishida J."/>
            <person name="Satou M."/>
            <person name="Sakurai T."/>
            <person name="Nakajima M."/>
            <person name="Enju A."/>
            <person name="Akiyama K."/>
            <person name="Oono Y."/>
            <person name="Muramatsu M."/>
            <person name="Hayashizaki Y."/>
            <person name="Kawai J."/>
            <person name="Carninci P."/>
            <person name="Itoh M."/>
            <person name="Ishii Y."/>
            <person name="Arakawa T."/>
            <person name="Shibata K."/>
            <person name="Shinagawa A."/>
            <person name="Shinozaki K."/>
        </authorList>
    </citation>
    <scope>NUCLEOTIDE SEQUENCE [LARGE SCALE MRNA]</scope>
    <source>
        <strain>cv. Columbia</strain>
    </source>
</reference>
<reference key="4">
    <citation type="journal article" date="2007" name="Plant J.">
        <title>Arabidopsis ESK1 encodes a novel regulator of freezing tolerance.</title>
        <authorList>
            <person name="Xin Z."/>
            <person name="Mandaokar A."/>
            <person name="Chen J."/>
            <person name="Last R.L."/>
            <person name="Browse J."/>
        </authorList>
    </citation>
    <scope>FUNCTION</scope>
    <scope>MUTAGENESIS OF GLY-145; GLY-214 AND GLU-259</scope>
    <scope>DISRUPTION PHENOTYPE</scope>
    <scope>TISSUE SPECIFICITY</scope>
    <scope>INDUCTION BY COLD</scope>
    <scope>GENE FAMILY</scope>
    <source>
        <strain>cv. Columbia</strain>
    </source>
</reference>
<reference key="5">
    <citation type="journal article" date="2008" name="BMC Plant Biol.">
        <title>ESKIMO1 is a key gene involved in water economy as well as cold acclimation and salt tolerance.</title>
        <authorList>
            <person name="Bouchabke-Coussa O."/>
            <person name="Quashie M.L."/>
            <person name="Seoane-Redondo J."/>
            <person name="Fortabat M.N."/>
            <person name="Gery C."/>
            <person name="Yu A."/>
            <person name="Linderme D."/>
            <person name="Trouverie J."/>
            <person name="Granier F."/>
            <person name="Teoule E."/>
            <person name="Durand-Tardif M."/>
        </authorList>
    </citation>
    <scope>FUNCTION</scope>
</reference>
<reference key="6">
    <citation type="journal article" date="2009" name="Plant Cell Environ.">
        <title>Metabolome and water status phenotyping of Arabidopsis under abiotic stress cues reveals new insight into ESK1 function.</title>
        <authorList>
            <person name="Lugan R."/>
            <person name="Niogret M.F."/>
            <person name="Kervazo L."/>
            <person name="Larher F.R."/>
            <person name="Kopka J."/>
            <person name="Bouchereau A."/>
        </authorList>
    </citation>
    <scope>FUNCTION</scope>
</reference>
<reference key="7">
    <citation type="journal article" date="2010" name="Plant Physiol.">
        <title>TRICHOME BIREFRINGENCE and its homolog AT5G01360 encode plant-specific DUF231 proteins required for cellulose biosynthesis in Arabidopsis.</title>
        <authorList>
            <person name="Bischoff V."/>
            <person name="Nita S."/>
            <person name="Neumetzler L."/>
            <person name="Schindelasch D."/>
            <person name="Urbain A."/>
            <person name="Eshed R."/>
            <person name="Persson S."/>
            <person name="Delmer D."/>
            <person name="Scheible W.R."/>
        </authorList>
    </citation>
    <scope>GENE FAMILY</scope>
    <scope>NOMENCLATURE</scope>
</reference>
<reference key="8">
    <citation type="journal article" date="2011" name="PLoS ONE">
        <title>ESKIMO1 disruption in Arabidopsis alters vascular tissue and impairs water transport.</title>
        <authorList>
            <person name="Lefebvre V."/>
            <person name="Fortabat M.N."/>
            <person name="Ducamp A."/>
            <person name="North H.M."/>
            <person name="Maia-Grondard A."/>
            <person name="Trouverie J."/>
            <person name="Boursiac Y."/>
            <person name="Mouille G."/>
            <person name="Durand-Tardif M."/>
        </authorList>
    </citation>
    <scope>FUNCTION</scope>
    <scope>TISSUE SPECIFICITY</scope>
    <scope>DISRUPTION PHENOTYPE</scope>
</reference>
<reference key="9">
    <citation type="journal article" date="2013" name="Mol. Plant">
        <title>Xylan O-acetylation impacts xylem development and enzymatic recalcitrance as indicated by the Arabidopsis mutant tbl29.</title>
        <authorList>
            <person name="Xiong G."/>
            <person name="Cheng K."/>
            <person name="Pauly M."/>
        </authorList>
    </citation>
    <scope>FUNCTION</scope>
    <scope>DISRUPTION PHENOTYPE</scope>
    <scope>TISSUE SPECIFICITY</scope>
</reference>
<reference key="10">
    <citation type="journal article" date="2013" name="Plant Cell Physiol.">
        <title>The Arabidopsis DUF231 domain-containing protein ESK1 mediates 2-O- and 3-O-acetylation of xylosyl residues in xylan.</title>
        <authorList>
            <person name="Yuan Y."/>
            <person name="Teng Q."/>
            <person name="Zhong R."/>
            <person name="Ye Z.H."/>
        </authorList>
    </citation>
    <scope>FUNCTION</scope>
    <scope>TISSUE SPECIFICITY</scope>
    <scope>SUBCELLULAR LOCATION</scope>
    <scope>DISRUPTION PHENOTYPE</scope>
</reference>
<reference key="11">
    <citation type="journal article" date="2018" name="Planta">
        <title>Xyloglucan O-acetyltransferases from Arabidopsis thaliana and Populus trichocarpa catalyze acetylation of fucosylated galactose residues on xyloglucan side chains.</title>
        <authorList>
            <person name="Zhong R."/>
            <person name="Cui D."/>
            <person name="Ye Z.H."/>
        </authorList>
    </citation>
    <scope>FUNCTION</scope>
    <scope>CATALYTIC ACTIVITY</scope>
</reference>
<reference key="12">
    <citation type="journal article" date="2010" name="Plant Signal. Behav.">
        <title>Involvement of TBL/DUF231 proteins into cell wall biology.</title>
        <authorList>
            <person name="Bischoff V."/>
            <person name="Selbig J."/>
            <person name="Scheible W.R."/>
        </authorList>
    </citation>
    <scope>3D-STRUCTURE MODELING</scope>
</reference>
<reference key="13">
    <citation type="journal article" date="2020" name="Plant Cell">
        <title>Molecular mechanism of polysaccharide acetylation by the Arabidopsis xylan O-acetyltransferase XOAT1.</title>
        <authorList>
            <person name="Lunin V.V."/>
            <person name="Wang H.T."/>
            <person name="Bharadwaj V.S."/>
            <person name="Alahuhta M."/>
            <person name="Pena M.J."/>
            <person name="Yang J.Y."/>
            <person name="Archer-Hartmann S.A."/>
            <person name="Azadi P."/>
            <person name="Himmel M.E."/>
            <person name="Moremen K.W."/>
            <person name="York W.S."/>
            <person name="Bomble Y.J."/>
            <person name="Urbanowicz B.R."/>
        </authorList>
    </citation>
    <scope>X-RAY CRYSTALLOGRAPHY (1.85 ANGSTROMS)</scope>
    <scope>FUNCTION</scope>
    <scope>ACTIVE SITES</scope>
    <scope>DISULFIDE BONDS</scope>
    <scope>ACETYLATION AT SER-216</scope>
    <scope>GLYCOSYLATION AT ASN-151; ASN-241; ASN-255; ASN-393; ASN-412 AND ASN-425</scope>
    <scope>MUTAGENESIS OF ASP-215; SER-216; ARG-219; ASN-220; HIS-437; ASP-462 AND HIS-465</scope>
</reference>
<comment type="function">
    <text evidence="3 4 5 6 7 8 9 10 14">Xylan acetyltransferase required for 2-O- and 3-O-monoacetylation of xylosyl residues in xylan (PubMed:23659919, PubMed:30083810, PubMed:32354790). Catalyzes the 2-O-acetylation of xylan, followed by nonenzymatic acetyl migration to the O-3 position, resulting in products that are monoacetylated at both O-2 and O-3 positions (PubMed:32354790). Is necessary for the formation of the functional xylem, which is required for water transport to aerial tissues (PubMed:21408051, PubMed:23340742). Acts as a negative regulator of cold acclimation (PubMed:17316173). Involved in water economy as well as salt tolerance (PubMed:19054354, PubMed:19061521). Regulated at the transcriptional level by NAC012/SND1 (Probable).</text>
</comment>
<comment type="subcellular location">
    <subcellularLocation>
        <location evidence="14">Golgi apparatus membrane</location>
        <topology evidence="14">Single-pass type II membrane protein</topology>
    </subcellularLocation>
</comment>
<comment type="tissue specificity">
    <text evidence="3 6 7 8">Expressed in roots, young seedlings, leaves, stems, flowers and developing siliques. Specifically expressed in secondary wall-forming cells, xylem and interfascicular fibers.</text>
</comment>
<comment type="induction">
    <text evidence="3">Not induced during cold acclimation.</text>
</comment>
<comment type="disruption phenotype">
    <text evidence="3 6 7 8">Strong constitutive freezing tolerance. Altered vascular apparatus morphology, and reduced xylan acetylation and secondary wall thickening. Reduced rosette-leaf growth and inflorescence size.</text>
</comment>
<comment type="miscellaneous">
    <text evidence="15">Contains 2 motifs that are conserved in esterases, but it is unlikely that this protein belongs to the catalytically active pectin esterases.</text>
</comment>
<comment type="similarity">
    <text evidence="14">Belongs to the PC-esterase family. TBL subfamily.</text>
</comment>
<proteinExistence type="evidence at protein level"/>
<feature type="chain" id="PRO_0000425394" description="Xylan O-acetyltransferase 1">
    <location>
        <begin position="1"/>
        <end position="487"/>
    </location>
</feature>
<feature type="topological domain" description="Cytoplasmic" evidence="14">
    <location>
        <begin position="1"/>
        <end position="21"/>
    </location>
</feature>
<feature type="transmembrane region" description="Helical; Signal-anchor for type II membrane protein" evidence="1">
    <location>
        <begin position="22"/>
        <end position="42"/>
    </location>
</feature>
<feature type="topological domain" description="Lumenal" evidence="14">
    <location>
        <begin position="43"/>
        <end position="487"/>
    </location>
</feature>
<feature type="short sequence motif" description="GDS motif" evidence="16">
    <location>
        <begin position="214"/>
        <end position="216"/>
    </location>
</feature>
<feature type="short sequence motif" description="DXXH motif" evidence="16">
    <location>
        <begin position="462"/>
        <end position="465"/>
    </location>
</feature>
<feature type="active site" description="Nucleophile" evidence="10">
    <location>
        <position position="216"/>
    </location>
</feature>
<feature type="active site" description="Proton donor" evidence="10">
    <location>
        <position position="462"/>
    </location>
</feature>
<feature type="active site" description="Proton acceptor" evidence="10">
    <location>
        <position position="465"/>
    </location>
</feature>
<feature type="modified residue" description="O-acetylserine" evidence="10">
    <location>
        <position position="216"/>
    </location>
</feature>
<feature type="glycosylation site" description="N-linked (GlcNAc...) asparagine" evidence="2 10 19">
    <location>
        <position position="151"/>
    </location>
</feature>
<feature type="glycosylation site" description="N-linked (GlcNAc...) asparagine" evidence="2 10 19">
    <location>
        <position position="241"/>
    </location>
</feature>
<feature type="glycosylation site" description="N-linked (GlcNAc...) asparagine" evidence="2 10 19">
    <location>
        <position position="255"/>
    </location>
</feature>
<feature type="glycosylation site" description="N-linked (GlcNAc...) asparagine" evidence="2 10 19">
    <location>
        <position position="393"/>
    </location>
</feature>
<feature type="glycosylation site" description="N-linked (GlcNAc...) asparagine" evidence="2 10 19">
    <location>
        <position position="412"/>
    </location>
</feature>
<feature type="glycosylation site" description="N-linked (GlcNAc...) asparagine" evidence="2 10 19">
    <location>
        <position position="425"/>
    </location>
</feature>
<feature type="disulfide bond" evidence="10 19">
    <location>
        <begin position="140"/>
        <end position="191"/>
    </location>
</feature>
<feature type="disulfide bond" evidence="10 19">
    <location>
        <begin position="162"/>
        <end position="227"/>
    </location>
</feature>
<feature type="disulfide bond" evidence="10 19">
    <location>
        <begin position="171"/>
        <end position="467"/>
    </location>
</feature>
<feature type="disulfide bond" evidence="10 19">
    <location>
        <begin position="384"/>
        <end position="463"/>
    </location>
</feature>
<feature type="mutagenesis site" description="In esk1-1; increased freezing tolerance." evidence="3">
    <original>G</original>
    <variation>R</variation>
    <location>
        <position position="145"/>
    </location>
</feature>
<feature type="mutagenesis site" description="In esk1-2; increased freezing tolerance." evidence="3">
    <original>G</original>
    <variation>E</variation>
    <location>
        <position position="214"/>
    </location>
</feature>
<feature type="mutagenesis site" description="Almost abolishes transferase activity." evidence="10">
    <original>D</original>
    <variation>A</variation>
    <location>
        <position position="215"/>
    </location>
</feature>
<feature type="mutagenesis site" description="Abolishes transferase activity." evidence="10">
    <original>S</original>
    <variation>A</variation>
    <location>
        <position position="216"/>
    </location>
</feature>
<feature type="mutagenesis site" description="Decreases transferase activity 2-fold." evidence="10">
    <original>R</original>
    <variation>A</variation>
    <location>
        <position position="219"/>
    </location>
</feature>
<feature type="mutagenesis site" description="No effect on transferase activity." evidence="10">
    <original>N</original>
    <variation>A</variation>
    <location>
        <position position="220"/>
    </location>
</feature>
<feature type="mutagenesis site" description="In esk1-3; increased freezing tolerance." evidence="3">
    <original>E</original>
    <variation>K</variation>
    <location>
        <position position="259"/>
    </location>
</feature>
<feature type="mutagenesis site" description="Decreases transferase activity 3-fold." evidence="10">
    <original>H</original>
    <variation>A</variation>
    <location>
        <position position="437"/>
    </location>
</feature>
<feature type="mutagenesis site" description="Abolishes transferase activity." evidence="10">
    <original>D</original>
    <variation>A</variation>
    <location>
        <position position="462"/>
    </location>
</feature>
<feature type="mutagenesis site" description="Abolishes transferase activity." evidence="10">
    <original>H</original>
    <variation>A</variation>
    <location>
        <position position="465"/>
    </location>
</feature>
<feature type="sequence conflict" description="In Ref. 3; BAC43257." evidence="14" ref="3">
    <original>M</original>
    <variation>I</variation>
    <location>
        <position position="343"/>
    </location>
</feature>
<feature type="strand" evidence="20">
    <location>
        <begin position="144"/>
        <end position="149"/>
    </location>
</feature>
<feature type="turn" evidence="20">
    <location>
        <begin position="151"/>
        <end position="153"/>
    </location>
</feature>
<feature type="strand" evidence="20">
    <location>
        <begin position="155"/>
        <end position="157"/>
    </location>
</feature>
<feature type="helix" evidence="20">
    <location>
        <begin position="159"/>
        <end position="161"/>
    </location>
</feature>
<feature type="turn" evidence="20">
    <location>
        <begin position="167"/>
        <end position="169"/>
    </location>
</feature>
<feature type="turn" evidence="20">
    <location>
        <begin position="171"/>
        <end position="175"/>
    </location>
</feature>
<feature type="helix" evidence="20">
    <location>
        <begin position="180"/>
        <end position="183"/>
    </location>
</feature>
<feature type="strand" evidence="20">
    <location>
        <begin position="184"/>
        <end position="191"/>
    </location>
</feature>
<feature type="helix" evidence="20">
    <location>
        <begin position="198"/>
        <end position="204"/>
    </location>
</feature>
<feature type="turn" evidence="20">
    <location>
        <begin position="205"/>
        <end position="207"/>
    </location>
</feature>
<feature type="strand" evidence="20">
    <location>
        <begin position="209"/>
        <end position="215"/>
    </location>
</feature>
<feature type="helix" evidence="20">
    <location>
        <begin position="216"/>
        <end position="230"/>
    </location>
</feature>
<feature type="strand" evidence="20">
    <location>
        <begin position="237"/>
        <end position="243"/>
    </location>
</feature>
<feature type="strand" evidence="20">
    <location>
        <begin position="246"/>
        <end position="251"/>
    </location>
</feature>
<feature type="turn" evidence="20">
    <location>
        <begin position="252"/>
        <end position="255"/>
    </location>
</feature>
<feature type="strand" evidence="20">
    <location>
        <begin position="256"/>
        <end position="262"/>
    </location>
</feature>
<feature type="helix" evidence="20">
    <location>
        <begin position="290"/>
        <end position="293"/>
    </location>
</feature>
<feature type="helix" evidence="20">
    <location>
        <begin position="294"/>
        <end position="296"/>
    </location>
</feature>
<feature type="strand" evidence="20">
    <location>
        <begin position="300"/>
        <end position="304"/>
    </location>
</feature>
<feature type="helix" evidence="20">
    <location>
        <begin position="308"/>
        <end position="310"/>
    </location>
</feature>
<feature type="strand" evidence="20">
    <location>
        <begin position="311"/>
        <end position="321"/>
    </location>
</feature>
<feature type="helix" evidence="20">
    <location>
        <begin position="323"/>
        <end position="325"/>
    </location>
</feature>
<feature type="strand" evidence="20">
    <location>
        <begin position="330"/>
        <end position="334"/>
    </location>
</feature>
<feature type="helix" evidence="20">
    <location>
        <begin position="335"/>
        <end position="353"/>
    </location>
</feature>
<feature type="turn" evidence="20">
    <location>
        <begin position="356"/>
        <end position="358"/>
    </location>
</feature>
<feature type="strand" evidence="20">
    <location>
        <begin position="360"/>
        <end position="364"/>
    </location>
</feature>
<feature type="helix" evidence="20">
    <location>
        <begin position="373"/>
        <end position="376"/>
    </location>
</feature>
<feature type="turn" evidence="20">
    <location>
        <begin position="383"/>
        <end position="386"/>
    </location>
</feature>
<feature type="helix" evidence="20">
    <location>
        <begin position="404"/>
        <end position="416"/>
    </location>
</feature>
<feature type="strand" evidence="20">
    <location>
        <begin position="417"/>
        <end position="419"/>
    </location>
</feature>
<feature type="strand" evidence="20">
    <location>
        <begin position="421"/>
        <end position="424"/>
    </location>
</feature>
<feature type="helix" evidence="20">
    <location>
        <begin position="427"/>
        <end position="431"/>
    </location>
</feature>
<feature type="strand" evidence="20">
    <location>
        <begin position="437"/>
        <end position="439"/>
    </location>
</feature>
<feature type="strand" evidence="20">
    <location>
        <begin position="441"/>
        <end position="444"/>
    </location>
</feature>
<feature type="helix" evidence="20">
    <location>
        <begin position="451"/>
        <end position="454"/>
    </location>
</feature>
<feature type="helix" evidence="20">
    <location>
        <begin position="457"/>
        <end position="460"/>
    </location>
</feature>
<feature type="strand" evidence="20">
    <location>
        <begin position="462"/>
        <end position="466"/>
    </location>
</feature>
<feature type="strand" evidence="20">
    <location>
        <begin position="468"/>
        <end position="470"/>
    </location>
</feature>
<feature type="helix" evidence="20">
    <location>
        <begin position="471"/>
        <end position="484"/>
    </location>
</feature>
<organism>
    <name type="scientific">Arabidopsis thaliana</name>
    <name type="common">Mouse-ear cress</name>
    <dbReference type="NCBI Taxonomy" id="3702"/>
    <lineage>
        <taxon>Eukaryota</taxon>
        <taxon>Viridiplantae</taxon>
        <taxon>Streptophyta</taxon>
        <taxon>Embryophyta</taxon>
        <taxon>Tracheophyta</taxon>
        <taxon>Spermatophyta</taxon>
        <taxon>Magnoliopsida</taxon>
        <taxon>eudicotyledons</taxon>
        <taxon>Gunneridae</taxon>
        <taxon>Pentapetalae</taxon>
        <taxon>rosids</taxon>
        <taxon>malvids</taxon>
        <taxon>Brassicales</taxon>
        <taxon>Brassicaceae</taxon>
        <taxon>Camelineae</taxon>
        <taxon>Arabidopsis</taxon>
    </lineage>
</organism>
<name>TBL29_ARATH</name>
<gene>
    <name evidence="11" type="primary">ESK1</name>
    <name evidence="12" type="synonym">TBL29</name>
    <name evidence="13" type="synonym">XOAT1</name>
    <name evidence="17" type="ordered locus">At3g55990</name>
    <name evidence="18" type="ORF">F27K19.170</name>
</gene>
<protein>
    <recommendedName>
        <fullName evidence="13">Xylan O-acetyltransferase 1</fullName>
        <ecNumber evidence="9">2.3.1.-</ecNumber>
    </recommendedName>
    <alternativeName>
        <fullName evidence="11">Protein ESKIMO 1</fullName>
    </alternativeName>
    <alternativeName>
        <fullName evidence="12">Protein trichome birefringence-like 29</fullName>
    </alternativeName>
</protein>
<evidence type="ECO:0000255" key="1"/>
<evidence type="ECO:0000255" key="2">
    <source>
        <dbReference type="PROSITE-ProRule" id="PRU00498"/>
    </source>
</evidence>
<evidence type="ECO:0000269" key="3">
    <source>
    </source>
</evidence>
<evidence type="ECO:0000269" key="4">
    <source>
    </source>
</evidence>
<evidence type="ECO:0000269" key="5">
    <source>
    </source>
</evidence>
<evidence type="ECO:0000269" key="6">
    <source>
    </source>
</evidence>
<evidence type="ECO:0000269" key="7">
    <source>
    </source>
</evidence>
<evidence type="ECO:0000269" key="8">
    <source>
    </source>
</evidence>
<evidence type="ECO:0000269" key="9">
    <source>
    </source>
</evidence>
<evidence type="ECO:0000269" key="10">
    <source>
    </source>
</evidence>
<evidence type="ECO:0000303" key="11">
    <source>
    </source>
</evidence>
<evidence type="ECO:0000303" key="12">
    <source>
    </source>
</evidence>
<evidence type="ECO:0000303" key="13">
    <source>
    </source>
</evidence>
<evidence type="ECO:0000305" key="14"/>
<evidence type="ECO:0000305" key="15">
    <source>
    </source>
</evidence>
<evidence type="ECO:0000305" key="16">
    <source>
    </source>
</evidence>
<evidence type="ECO:0000312" key="17">
    <source>
        <dbReference type="Araport" id="AT3G55990"/>
    </source>
</evidence>
<evidence type="ECO:0000312" key="18">
    <source>
        <dbReference type="EMBL" id="CAB87853.1"/>
    </source>
</evidence>
<evidence type="ECO:0007744" key="19">
    <source>
        <dbReference type="PDB" id="6CCI"/>
    </source>
</evidence>
<evidence type="ECO:0007829" key="20">
    <source>
        <dbReference type="PDB" id="6CCI"/>
    </source>
</evidence>
<keyword id="KW-0002">3D-structure</keyword>
<keyword id="KW-0007">Acetylation</keyword>
<keyword id="KW-1015">Disulfide bond</keyword>
<keyword id="KW-0325">Glycoprotein</keyword>
<keyword id="KW-0333">Golgi apparatus</keyword>
<keyword id="KW-0472">Membrane</keyword>
<keyword id="KW-1185">Reference proteome</keyword>
<keyword id="KW-0735">Signal-anchor</keyword>
<keyword id="KW-0808">Transferase</keyword>
<keyword id="KW-0812">Transmembrane</keyword>
<keyword id="KW-1133">Transmembrane helix</keyword>
<accession>Q9LY46</accession>
<accession>Q8GWS5</accession>